<protein>
    <recommendedName>
        <fullName evidence="3">Lambda-hexatoxin-Hv1b</fullName>
        <shortName evidence="3">Lambda-HXTX-Hv1b</shortName>
    </recommendedName>
    <alternativeName>
        <fullName>Janus-atracotoxin-Hv1b</fullName>
        <shortName>Janus-AcTx-Hv1b</shortName>
    </alternativeName>
    <alternativeName>
        <fullName>Kappa-atracotoxin-Hv1b</fullName>
        <shortName>Kappa-AcTx-Hv1b</shortName>
    </alternativeName>
    <alternativeName>
        <fullName evidence="3">Kappa-hexatoxin-Hv1b</fullName>
        <shortName evidence="3">Kappa-HXTX-Hv1b</shortName>
    </alternativeName>
</protein>
<organism>
    <name type="scientific">Hadronyche versuta</name>
    <name type="common">Blue mountains funnel-web spider</name>
    <name type="synonym">Atrax versutus</name>
    <dbReference type="NCBI Taxonomy" id="6904"/>
    <lineage>
        <taxon>Eukaryota</taxon>
        <taxon>Metazoa</taxon>
        <taxon>Ecdysozoa</taxon>
        <taxon>Arthropoda</taxon>
        <taxon>Chelicerata</taxon>
        <taxon>Arachnida</taxon>
        <taxon>Araneae</taxon>
        <taxon>Mygalomorphae</taxon>
        <taxon>Hexathelidae</taxon>
        <taxon>Hadronyche</taxon>
    </lineage>
</organism>
<sequence>TICTGADRPCAACCPCCPGTSCQGPEPNGVSYCRND</sequence>
<reference key="1">
    <citation type="journal article" date="2000" name="Nat. Struct. Biol.">
        <title>Discovery and characterization of a family of insecticidal neurotoxins with a rare vicinal disulfide bridge.</title>
        <authorList>
            <person name="Wang X.-H."/>
            <person name="Connor M."/>
            <person name="Smith R."/>
            <person name="Maciejewski M.W."/>
            <person name="Howden M.E.H."/>
            <person name="Nicholson G.M."/>
            <person name="Christie M.J."/>
            <person name="King G.F."/>
        </authorList>
    </citation>
    <scope>PROTEIN SEQUENCE</scope>
    <source>
        <tissue>Venom</tissue>
    </source>
</reference>
<name>TK1B_HADVE</name>
<keyword id="KW-1221">Calcium-activated potassium channel impairing toxin</keyword>
<keyword id="KW-0903">Direct protein sequencing</keyword>
<keyword id="KW-1015">Disulfide bond</keyword>
<keyword id="KW-0872">Ion channel impairing toxin</keyword>
<keyword id="KW-0960">Knottin</keyword>
<keyword id="KW-0528">Neurotoxin</keyword>
<keyword id="KW-0632">Potassium channel impairing toxin</keyword>
<keyword id="KW-0964">Secreted</keyword>
<keyword id="KW-0800">Toxin</keyword>
<accession>P82226</accession>
<comment type="function">
    <text evidence="2">This excitatory toxin inhibits insect calcium-activated potassium (KCa) channels (Slo-type).</text>
</comment>
<comment type="subcellular location">
    <subcellularLocation>
        <location>Secreted</location>
    </subcellularLocation>
</comment>
<comment type="tissue specificity">
    <text>Expressed by the venom gland.</text>
</comment>
<comment type="domain">
    <text evidence="1">The presence of a 'disulfide through disulfide knot' structurally defines this protein as a knottin.</text>
</comment>
<comment type="similarity">
    <text evidence="3">Belongs to the neurotoxin 11 (kappa toxin) family.</text>
</comment>
<comment type="caution">
    <text evidence="3">This toxin has the prefix lambda in its name (instead of kappa), since lambda is the Greek letter attributed to calcium-activated potassium (KCa) channel impairing toxins (according to the nomenclature of King et al., 2008).</text>
</comment>
<dbReference type="SMR" id="P82226"/>
<dbReference type="ArachnoServer" id="AS000173">
    <property type="toxin name" value="kappa-hexatoxin-Hv1b"/>
</dbReference>
<dbReference type="GO" id="GO:0005576">
    <property type="term" value="C:extracellular region"/>
    <property type="evidence" value="ECO:0007669"/>
    <property type="project" value="UniProtKB-SubCell"/>
</dbReference>
<dbReference type="GO" id="GO:0015459">
    <property type="term" value="F:potassium channel regulator activity"/>
    <property type="evidence" value="ECO:0007669"/>
    <property type="project" value="UniProtKB-KW"/>
</dbReference>
<dbReference type="GO" id="GO:0090729">
    <property type="term" value="F:toxin activity"/>
    <property type="evidence" value="ECO:0007669"/>
    <property type="project" value="UniProtKB-KW"/>
</dbReference>
<dbReference type="InterPro" id="IPR012499">
    <property type="entry name" value="Toxin_16"/>
</dbReference>
<dbReference type="Pfam" id="PF07945">
    <property type="entry name" value="Toxin_16"/>
    <property type="match status" value="1"/>
</dbReference>
<dbReference type="SUPFAM" id="SSF57059">
    <property type="entry name" value="omega toxin-like"/>
    <property type="match status" value="1"/>
</dbReference>
<dbReference type="PROSITE" id="PS60020">
    <property type="entry name" value="J_ACTX"/>
    <property type="match status" value="1"/>
</dbReference>
<feature type="peptide" id="PRO_0000044997" description="Lambda-hexatoxin-Hv1b">
    <location>
        <begin position="1"/>
        <end position="36"/>
    </location>
</feature>
<feature type="site" description="Important for the neurotoxic activity" evidence="1">
    <location>
        <position position="2"/>
    </location>
</feature>
<feature type="site" description="Critical for the neurotoxic activity" evidence="1">
    <location>
        <position position="8"/>
    </location>
</feature>
<feature type="site" description="Critical for the neurotoxic activity" evidence="1">
    <location>
        <position position="9"/>
    </location>
</feature>
<feature type="site" description="Critical for the neurotoxic activity" evidence="1">
    <location>
        <position position="13"/>
    </location>
</feature>
<feature type="site" description="Critical for the neurotoxic activity" evidence="1">
    <location>
        <position position="14"/>
    </location>
</feature>
<feature type="site" description="Important for the neurotoxic activity" evidence="1">
    <location>
        <position position="30"/>
    </location>
</feature>
<feature type="site" description="Critical for the neurotoxic activity" evidence="1">
    <location>
        <position position="32"/>
    </location>
</feature>
<feature type="disulfide bond" evidence="1">
    <location>
        <begin position="3"/>
        <end position="17"/>
    </location>
</feature>
<feature type="disulfide bond" evidence="1">
    <location>
        <begin position="10"/>
        <end position="22"/>
    </location>
</feature>
<feature type="disulfide bond" evidence="1">
    <location>
        <begin position="13"/>
        <end position="14"/>
    </location>
</feature>
<feature type="disulfide bond" evidence="1">
    <location>
        <begin position="16"/>
        <end position="33"/>
    </location>
</feature>
<proteinExistence type="evidence at protein level"/>
<evidence type="ECO:0000250" key="1"/>
<evidence type="ECO:0000250" key="2">
    <source>
        <dbReference type="UniProtKB" id="P82228"/>
    </source>
</evidence>
<evidence type="ECO:0000305" key="3"/>